<organism>
    <name type="scientific">Neisseria meningitidis serogroup C / serotype 2a (strain ATCC 700532 / DSM 15464 / FAM18)</name>
    <dbReference type="NCBI Taxonomy" id="272831"/>
    <lineage>
        <taxon>Bacteria</taxon>
        <taxon>Pseudomonadati</taxon>
        <taxon>Pseudomonadota</taxon>
        <taxon>Betaproteobacteria</taxon>
        <taxon>Neisseriales</taxon>
        <taxon>Neisseriaceae</taxon>
        <taxon>Neisseria</taxon>
    </lineage>
</organism>
<dbReference type="EMBL" id="AM421808">
    <property type="protein sequence ID" value="CAM09444.1"/>
    <property type="molecule type" value="Genomic_DNA"/>
</dbReference>
<dbReference type="RefSeq" id="WP_002218431.1">
    <property type="nucleotide sequence ID" value="NC_008767.1"/>
</dbReference>
<dbReference type="SMR" id="A1KRG8"/>
<dbReference type="GeneID" id="94582015"/>
<dbReference type="KEGG" id="nmc:NMC0125"/>
<dbReference type="HOGENOM" id="CLU_104295_1_2_4"/>
<dbReference type="Proteomes" id="UP000002286">
    <property type="component" value="Chromosome"/>
</dbReference>
<dbReference type="GO" id="GO:0015935">
    <property type="term" value="C:small ribosomal subunit"/>
    <property type="evidence" value="ECO:0007669"/>
    <property type="project" value="InterPro"/>
</dbReference>
<dbReference type="GO" id="GO:0019843">
    <property type="term" value="F:rRNA binding"/>
    <property type="evidence" value="ECO:0007669"/>
    <property type="project" value="UniProtKB-UniRule"/>
</dbReference>
<dbReference type="GO" id="GO:0003735">
    <property type="term" value="F:structural constituent of ribosome"/>
    <property type="evidence" value="ECO:0007669"/>
    <property type="project" value="InterPro"/>
</dbReference>
<dbReference type="GO" id="GO:0000049">
    <property type="term" value="F:tRNA binding"/>
    <property type="evidence" value="ECO:0007669"/>
    <property type="project" value="UniProtKB-UniRule"/>
</dbReference>
<dbReference type="GO" id="GO:0006412">
    <property type="term" value="P:translation"/>
    <property type="evidence" value="ECO:0007669"/>
    <property type="project" value="UniProtKB-UniRule"/>
</dbReference>
<dbReference type="CDD" id="cd03368">
    <property type="entry name" value="Ribosomal_S12"/>
    <property type="match status" value="1"/>
</dbReference>
<dbReference type="FunFam" id="2.40.50.140:FF:000001">
    <property type="entry name" value="30S ribosomal protein S12"/>
    <property type="match status" value="1"/>
</dbReference>
<dbReference type="Gene3D" id="2.40.50.140">
    <property type="entry name" value="Nucleic acid-binding proteins"/>
    <property type="match status" value="1"/>
</dbReference>
<dbReference type="HAMAP" id="MF_00403_B">
    <property type="entry name" value="Ribosomal_uS12_B"/>
    <property type="match status" value="1"/>
</dbReference>
<dbReference type="InterPro" id="IPR012340">
    <property type="entry name" value="NA-bd_OB-fold"/>
</dbReference>
<dbReference type="InterPro" id="IPR006032">
    <property type="entry name" value="Ribosomal_uS12"/>
</dbReference>
<dbReference type="InterPro" id="IPR005679">
    <property type="entry name" value="Ribosomal_uS12_bac"/>
</dbReference>
<dbReference type="NCBIfam" id="TIGR00981">
    <property type="entry name" value="rpsL_bact"/>
    <property type="match status" value="1"/>
</dbReference>
<dbReference type="PANTHER" id="PTHR11652">
    <property type="entry name" value="30S RIBOSOMAL PROTEIN S12 FAMILY MEMBER"/>
    <property type="match status" value="1"/>
</dbReference>
<dbReference type="Pfam" id="PF00164">
    <property type="entry name" value="Ribosom_S12_S23"/>
    <property type="match status" value="1"/>
</dbReference>
<dbReference type="PIRSF" id="PIRSF002133">
    <property type="entry name" value="Ribosomal_S12/S23"/>
    <property type="match status" value="1"/>
</dbReference>
<dbReference type="PRINTS" id="PR01034">
    <property type="entry name" value="RIBOSOMALS12"/>
</dbReference>
<dbReference type="SUPFAM" id="SSF50249">
    <property type="entry name" value="Nucleic acid-binding proteins"/>
    <property type="match status" value="1"/>
</dbReference>
<dbReference type="PROSITE" id="PS00055">
    <property type="entry name" value="RIBOSOMAL_S12"/>
    <property type="match status" value="1"/>
</dbReference>
<protein>
    <recommendedName>
        <fullName evidence="2">Small ribosomal subunit protein uS12</fullName>
    </recommendedName>
    <alternativeName>
        <fullName evidence="4">30S ribosomal protein S12</fullName>
    </alternativeName>
</protein>
<name>RS12_NEIMF</name>
<proteinExistence type="inferred from homology"/>
<sequence>MPTINQLVRKGRQKPVYVNKVPALEACPQKRGVCTRVYTTTPKKPNSALRKVCKVRLTNGFEVISYIGGEGHNLQEHSVVLIRGGRVKDLPGVRYHTVRGSLDTAGVKDRKQARSKYGAKRPK</sequence>
<reference key="1">
    <citation type="journal article" date="2007" name="PLoS Genet.">
        <title>Meningococcal genetic variation mechanisms viewed through comparative analysis of serogroup C strain FAM18.</title>
        <authorList>
            <person name="Bentley S.D."/>
            <person name="Vernikos G.S."/>
            <person name="Snyder L.A.S."/>
            <person name="Churcher C."/>
            <person name="Arrowsmith C."/>
            <person name="Chillingworth T."/>
            <person name="Cronin A."/>
            <person name="Davis P.H."/>
            <person name="Holroyd N.E."/>
            <person name="Jagels K."/>
            <person name="Maddison M."/>
            <person name="Moule S."/>
            <person name="Rabbinowitsch E."/>
            <person name="Sharp S."/>
            <person name="Unwin L."/>
            <person name="Whitehead S."/>
            <person name="Quail M.A."/>
            <person name="Achtman M."/>
            <person name="Barrell B.G."/>
            <person name="Saunders N.J."/>
            <person name="Parkhill J."/>
        </authorList>
    </citation>
    <scope>NUCLEOTIDE SEQUENCE [LARGE SCALE GENOMIC DNA]</scope>
    <source>
        <strain>ATCC 700532 / DSM 15464 / FAM18</strain>
    </source>
</reference>
<feature type="chain" id="PRO_0000296005" description="Small ribosomal subunit protein uS12">
    <location>
        <begin position="1"/>
        <end position="123"/>
    </location>
</feature>
<feature type="region of interest" description="Disordered" evidence="3">
    <location>
        <begin position="104"/>
        <end position="123"/>
    </location>
</feature>
<feature type="compositionally biased region" description="Basic residues" evidence="3">
    <location>
        <begin position="113"/>
        <end position="123"/>
    </location>
</feature>
<feature type="modified residue" description="3-methylthioaspartic acid" evidence="1">
    <location>
        <position position="89"/>
    </location>
</feature>
<comment type="function">
    <text evidence="2">With S4 and S5 plays an important role in translational accuracy.</text>
</comment>
<comment type="function">
    <text evidence="2">Interacts with and stabilizes bases of the 16S rRNA that are involved in tRNA selection in the A site and with the mRNA backbone. Located at the interface of the 30S and 50S subunits, it traverses the body of the 30S subunit contacting proteins on the other side and probably holding the rRNA structure together. The combined cluster of proteins S8, S12 and S17 appears to hold together the shoulder and platform of the 30S subunit.</text>
</comment>
<comment type="subunit">
    <text evidence="2">Part of the 30S ribosomal subunit. Contacts proteins S8 and S17. May interact with IF1 in the 30S initiation complex.</text>
</comment>
<comment type="similarity">
    <text evidence="2">Belongs to the universal ribosomal protein uS12 family.</text>
</comment>
<accession>A1KRG8</accession>
<gene>
    <name evidence="2" type="primary">rpsL</name>
    <name type="ordered locus">NMC0125</name>
</gene>
<keyword id="KW-0488">Methylation</keyword>
<keyword id="KW-0687">Ribonucleoprotein</keyword>
<keyword id="KW-0689">Ribosomal protein</keyword>
<keyword id="KW-0694">RNA-binding</keyword>
<keyword id="KW-0699">rRNA-binding</keyword>
<keyword id="KW-0820">tRNA-binding</keyword>
<evidence type="ECO:0000250" key="1"/>
<evidence type="ECO:0000255" key="2">
    <source>
        <dbReference type="HAMAP-Rule" id="MF_00403"/>
    </source>
</evidence>
<evidence type="ECO:0000256" key="3">
    <source>
        <dbReference type="SAM" id="MobiDB-lite"/>
    </source>
</evidence>
<evidence type="ECO:0000305" key="4"/>